<feature type="chain" id="PRO_0000224367" description="DNA mismatch repair protein MutS">
    <location>
        <begin position="1"/>
        <end position="879"/>
    </location>
</feature>
<feature type="region of interest" description="Disordered" evidence="2">
    <location>
        <begin position="824"/>
        <end position="845"/>
    </location>
</feature>
<feature type="binding site" evidence="1">
    <location>
        <begin position="629"/>
        <end position="636"/>
    </location>
    <ligand>
        <name>ATP</name>
        <dbReference type="ChEBI" id="CHEBI:30616"/>
    </ligand>
</feature>
<protein>
    <recommendedName>
        <fullName evidence="1">DNA mismatch repair protein MutS</fullName>
    </recommendedName>
</protein>
<reference key="1">
    <citation type="journal article" date="2004" name="Environ. Microbiol.">
        <title>The genome of Desulfotalea psychrophila, a sulfate-reducing bacterium from permanently cold Arctic sediments.</title>
        <authorList>
            <person name="Rabus R."/>
            <person name="Ruepp A."/>
            <person name="Frickey T."/>
            <person name="Rattei T."/>
            <person name="Fartmann B."/>
            <person name="Stark M."/>
            <person name="Bauer M."/>
            <person name="Zibat A."/>
            <person name="Lombardot T."/>
            <person name="Becker I."/>
            <person name="Amann J."/>
            <person name="Gellner K."/>
            <person name="Teeling H."/>
            <person name="Leuschner W.D."/>
            <person name="Gloeckner F.-O."/>
            <person name="Lupas A.N."/>
            <person name="Amann R."/>
            <person name="Klenk H.-P."/>
        </authorList>
    </citation>
    <scope>NUCLEOTIDE SEQUENCE [LARGE SCALE GENOMIC DNA]</scope>
    <source>
        <strain>DSM 12343 / LSv54</strain>
    </source>
</reference>
<organism>
    <name type="scientific">Desulfotalea psychrophila (strain LSv54 / DSM 12343)</name>
    <dbReference type="NCBI Taxonomy" id="177439"/>
    <lineage>
        <taxon>Bacteria</taxon>
        <taxon>Pseudomonadati</taxon>
        <taxon>Thermodesulfobacteriota</taxon>
        <taxon>Desulfobulbia</taxon>
        <taxon>Desulfobulbales</taxon>
        <taxon>Desulfocapsaceae</taxon>
        <taxon>Desulfotalea</taxon>
    </lineage>
</organism>
<gene>
    <name evidence="1" type="primary">mutS</name>
    <name type="ordered locus">DP0840</name>
</gene>
<evidence type="ECO:0000255" key="1">
    <source>
        <dbReference type="HAMAP-Rule" id="MF_00096"/>
    </source>
</evidence>
<evidence type="ECO:0000256" key="2">
    <source>
        <dbReference type="SAM" id="MobiDB-lite"/>
    </source>
</evidence>
<keyword id="KW-0067">ATP-binding</keyword>
<keyword id="KW-0227">DNA damage</keyword>
<keyword id="KW-0234">DNA repair</keyword>
<keyword id="KW-0238">DNA-binding</keyword>
<keyword id="KW-0547">Nucleotide-binding</keyword>
<keyword id="KW-1185">Reference proteome</keyword>
<accession>Q6AQ04</accession>
<dbReference type="EMBL" id="CR522870">
    <property type="protein sequence ID" value="CAG35569.1"/>
    <property type="molecule type" value="Genomic_DNA"/>
</dbReference>
<dbReference type="RefSeq" id="WP_011188085.1">
    <property type="nucleotide sequence ID" value="NC_006138.1"/>
</dbReference>
<dbReference type="SMR" id="Q6AQ04"/>
<dbReference type="STRING" id="177439.DP0840"/>
<dbReference type="KEGG" id="dps:DP0840"/>
<dbReference type="eggNOG" id="COG0249">
    <property type="taxonomic scope" value="Bacteria"/>
</dbReference>
<dbReference type="HOGENOM" id="CLU_002472_3_1_7"/>
<dbReference type="OrthoDB" id="9802448at2"/>
<dbReference type="Proteomes" id="UP000000602">
    <property type="component" value="Chromosome"/>
</dbReference>
<dbReference type="GO" id="GO:0005829">
    <property type="term" value="C:cytosol"/>
    <property type="evidence" value="ECO:0007669"/>
    <property type="project" value="TreeGrafter"/>
</dbReference>
<dbReference type="GO" id="GO:0005524">
    <property type="term" value="F:ATP binding"/>
    <property type="evidence" value="ECO:0007669"/>
    <property type="project" value="UniProtKB-UniRule"/>
</dbReference>
<dbReference type="GO" id="GO:0140664">
    <property type="term" value="F:ATP-dependent DNA damage sensor activity"/>
    <property type="evidence" value="ECO:0007669"/>
    <property type="project" value="InterPro"/>
</dbReference>
<dbReference type="GO" id="GO:0003684">
    <property type="term" value="F:damaged DNA binding"/>
    <property type="evidence" value="ECO:0007669"/>
    <property type="project" value="UniProtKB-UniRule"/>
</dbReference>
<dbReference type="GO" id="GO:0030983">
    <property type="term" value="F:mismatched DNA binding"/>
    <property type="evidence" value="ECO:0007669"/>
    <property type="project" value="InterPro"/>
</dbReference>
<dbReference type="GO" id="GO:0006298">
    <property type="term" value="P:mismatch repair"/>
    <property type="evidence" value="ECO:0007669"/>
    <property type="project" value="UniProtKB-UniRule"/>
</dbReference>
<dbReference type="CDD" id="cd03284">
    <property type="entry name" value="ABC_MutS1"/>
    <property type="match status" value="1"/>
</dbReference>
<dbReference type="FunFam" id="1.10.1420.10:FF:000001">
    <property type="entry name" value="DNA mismatch repair protein MutS"/>
    <property type="match status" value="1"/>
</dbReference>
<dbReference type="FunFam" id="3.40.1170.10:FF:000001">
    <property type="entry name" value="DNA mismatch repair protein MutS"/>
    <property type="match status" value="1"/>
</dbReference>
<dbReference type="FunFam" id="3.40.50.300:FF:000870">
    <property type="entry name" value="MutS protein homolog 4"/>
    <property type="match status" value="1"/>
</dbReference>
<dbReference type="Gene3D" id="1.10.1420.10">
    <property type="match status" value="2"/>
</dbReference>
<dbReference type="Gene3D" id="6.10.140.430">
    <property type="match status" value="1"/>
</dbReference>
<dbReference type="Gene3D" id="3.40.1170.10">
    <property type="entry name" value="DNA repair protein MutS, domain I"/>
    <property type="match status" value="1"/>
</dbReference>
<dbReference type="Gene3D" id="3.30.420.110">
    <property type="entry name" value="MutS, connector domain"/>
    <property type="match status" value="1"/>
</dbReference>
<dbReference type="Gene3D" id="3.40.50.300">
    <property type="entry name" value="P-loop containing nucleotide triphosphate hydrolases"/>
    <property type="match status" value="1"/>
</dbReference>
<dbReference type="HAMAP" id="MF_00096">
    <property type="entry name" value="MutS"/>
    <property type="match status" value="1"/>
</dbReference>
<dbReference type="InterPro" id="IPR005748">
    <property type="entry name" value="DNA_mismatch_repair_MutS"/>
</dbReference>
<dbReference type="InterPro" id="IPR007695">
    <property type="entry name" value="DNA_mismatch_repair_MutS-lik_N"/>
</dbReference>
<dbReference type="InterPro" id="IPR017261">
    <property type="entry name" value="DNA_mismatch_repair_MutS/MSH"/>
</dbReference>
<dbReference type="InterPro" id="IPR000432">
    <property type="entry name" value="DNA_mismatch_repair_MutS_C"/>
</dbReference>
<dbReference type="InterPro" id="IPR007861">
    <property type="entry name" value="DNA_mismatch_repair_MutS_clamp"/>
</dbReference>
<dbReference type="InterPro" id="IPR007696">
    <property type="entry name" value="DNA_mismatch_repair_MutS_core"/>
</dbReference>
<dbReference type="InterPro" id="IPR016151">
    <property type="entry name" value="DNA_mismatch_repair_MutS_N"/>
</dbReference>
<dbReference type="InterPro" id="IPR036187">
    <property type="entry name" value="DNA_mismatch_repair_MutS_sf"/>
</dbReference>
<dbReference type="InterPro" id="IPR007860">
    <property type="entry name" value="DNA_mmatch_repair_MutS_con_dom"/>
</dbReference>
<dbReference type="InterPro" id="IPR045076">
    <property type="entry name" value="MutS"/>
</dbReference>
<dbReference type="InterPro" id="IPR036678">
    <property type="entry name" value="MutS_con_dom_sf"/>
</dbReference>
<dbReference type="InterPro" id="IPR027417">
    <property type="entry name" value="P-loop_NTPase"/>
</dbReference>
<dbReference type="NCBIfam" id="TIGR01070">
    <property type="entry name" value="mutS1"/>
    <property type="match status" value="1"/>
</dbReference>
<dbReference type="NCBIfam" id="NF003810">
    <property type="entry name" value="PRK05399.1"/>
    <property type="match status" value="1"/>
</dbReference>
<dbReference type="PANTHER" id="PTHR11361:SF34">
    <property type="entry name" value="DNA MISMATCH REPAIR PROTEIN MSH1, MITOCHONDRIAL"/>
    <property type="match status" value="1"/>
</dbReference>
<dbReference type="PANTHER" id="PTHR11361">
    <property type="entry name" value="DNA MISMATCH REPAIR PROTEIN MUTS FAMILY MEMBER"/>
    <property type="match status" value="1"/>
</dbReference>
<dbReference type="Pfam" id="PF01624">
    <property type="entry name" value="MutS_I"/>
    <property type="match status" value="1"/>
</dbReference>
<dbReference type="Pfam" id="PF05188">
    <property type="entry name" value="MutS_II"/>
    <property type="match status" value="1"/>
</dbReference>
<dbReference type="Pfam" id="PF05192">
    <property type="entry name" value="MutS_III"/>
    <property type="match status" value="1"/>
</dbReference>
<dbReference type="Pfam" id="PF05190">
    <property type="entry name" value="MutS_IV"/>
    <property type="match status" value="1"/>
</dbReference>
<dbReference type="Pfam" id="PF00488">
    <property type="entry name" value="MutS_V"/>
    <property type="match status" value="1"/>
</dbReference>
<dbReference type="PIRSF" id="PIRSF037677">
    <property type="entry name" value="DNA_mis_repair_Msh6"/>
    <property type="match status" value="1"/>
</dbReference>
<dbReference type="SMART" id="SM00534">
    <property type="entry name" value="MUTSac"/>
    <property type="match status" value="1"/>
</dbReference>
<dbReference type="SMART" id="SM00533">
    <property type="entry name" value="MUTSd"/>
    <property type="match status" value="1"/>
</dbReference>
<dbReference type="SUPFAM" id="SSF55271">
    <property type="entry name" value="DNA repair protein MutS, domain I"/>
    <property type="match status" value="1"/>
</dbReference>
<dbReference type="SUPFAM" id="SSF53150">
    <property type="entry name" value="DNA repair protein MutS, domain II"/>
    <property type="match status" value="1"/>
</dbReference>
<dbReference type="SUPFAM" id="SSF48334">
    <property type="entry name" value="DNA repair protein MutS, domain III"/>
    <property type="match status" value="1"/>
</dbReference>
<dbReference type="SUPFAM" id="SSF52540">
    <property type="entry name" value="P-loop containing nucleoside triphosphate hydrolases"/>
    <property type="match status" value="1"/>
</dbReference>
<dbReference type="PROSITE" id="PS00486">
    <property type="entry name" value="DNA_MISMATCH_REPAIR_2"/>
    <property type="match status" value="1"/>
</dbReference>
<sequence length="879" mass="99041">MPKLKITPMMQQYFKLKEQHPHTILFYRMGDFYEMFFEDAITASKILGITLTSRNKKSDSAQIPMCGIPYHALQGYLAKMVEAGKRVAICEQVEDPSTAQGIVKREVVQIVTPGVVTDNQLLDAKSNNFVTAISRGKNNRYGLSFLDITTGEFIVADFAGSDGEADILDQLTRLTPTELLVSEEELEDFAETIDLATTLIPGLCITPRPHHLFDFDQSHEKLLEHFAVISLDGFGCETLVEGQIAAAILLDYIEETQKSAIHHIEKLSRLELDAILQIDDSSRRNLELTQTIVGGNRSGSLLSVLDLTTTPMGARFLKQAILFPLQDRARILRRLNAVGYFFNNSEARHQIRELLDQVYDIERLNSRITLGSANGRDMLAMKQSLARLPEMLTELRKCDTDELIEIEQTLDTLEDLHQLLDKSIHPDPPTNIREGNLIREGYNAELDEIIVLLRDGKKLILDLEAKERERTGIAKLKVSYNRVFGYFIEVSRAQSSRVPEHYIRKQTLVNAERFITPELKEFETKVLGAEDRRLELEYQLFATVRNELASHSSRFLATAHQLALLDFYASAAEVSQQYNYHRPEIRDDGSLEIREGRHPVIERSLPAGKFVPNDVYLDQAENEILVITGPNMAGKSTVLRQTALIVLMAQMGYYVPADSARIGVVDRIFTRVGAMDDLRRGQSTFMVEMSETANILNNATPRSLVILDEIGRGTSTYDGLSIAWAVTEHLVQKDGIGVKTMFATHYHELTDLARRYARIQNYSIAVREWQKSVIFLHKLIKGGTSRSYGIQVAALAGVPAQVVERAHEILHSIESGDFLAGEKVGGQPQKELSEHKPHQPSLFAPPTDEIRTKIREMDLDELTPRQALDALYALKEMTV</sequence>
<comment type="function">
    <text evidence="1">This protein is involved in the repair of mismatches in DNA. It is possible that it carries out the mismatch recognition step. This protein has a weak ATPase activity.</text>
</comment>
<comment type="similarity">
    <text evidence="1">Belongs to the DNA mismatch repair MutS family.</text>
</comment>
<proteinExistence type="inferred from homology"/>
<name>MUTS_DESPS</name>